<comment type="function">
    <text evidence="1">Tubulin-folding protein; involved in the early step of the tubulin folding pathway.</text>
</comment>
<comment type="subunit">
    <text evidence="1">Supercomplex made of cofactors A to E. Cofactors A and D function by capturing and stabilizing tubulin in a quasi-native conformation. Cofactor E binds to the cofactor D-tubulin complex; interaction with cofactor C then causes the release of tubulin polypeptides that are committed to the native state (By similarity).</text>
</comment>
<comment type="subcellular location">
    <subcellularLocation>
        <location evidence="1">Cytoplasm</location>
        <location evidence="1">Cytoskeleton</location>
    </subcellularLocation>
</comment>
<comment type="similarity">
    <text evidence="2">Belongs to the TBCA family.</text>
</comment>
<gene>
    <name type="primary">tbca</name>
    <name type="ORF">DDB_G0271706</name>
</gene>
<sequence>MVLDTKRSLKIKIDALKRLEKDYMLYKKEEQLQIENVERFKADETKDIYDVKKQIEILDENKTMIIDSVSRVTAFLVQFSEFLEEHKNEDDGSEIWKDSYDIIDQISTKFLGE</sequence>
<name>TBCA_DICDI</name>
<reference key="1">
    <citation type="journal article" date="2002" name="Nature">
        <title>Sequence and analysis of chromosome 2 of Dictyostelium discoideum.</title>
        <authorList>
            <person name="Gloeckner G."/>
            <person name="Eichinger L."/>
            <person name="Szafranski K."/>
            <person name="Pachebat J.A."/>
            <person name="Bankier A.T."/>
            <person name="Dear P.H."/>
            <person name="Lehmann R."/>
            <person name="Baumgart C."/>
            <person name="Parra G."/>
            <person name="Abril J.F."/>
            <person name="Guigo R."/>
            <person name="Kumpf K."/>
            <person name="Tunggal B."/>
            <person name="Cox E.C."/>
            <person name="Quail M.A."/>
            <person name="Platzer M."/>
            <person name="Rosenthal A."/>
            <person name="Noegel A.A."/>
        </authorList>
    </citation>
    <scope>NUCLEOTIDE SEQUENCE [LARGE SCALE GENOMIC DNA]</scope>
    <source>
        <strain>AX4</strain>
    </source>
</reference>
<reference key="2">
    <citation type="journal article" date="2005" name="Nature">
        <title>The genome of the social amoeba Dictyostelium discoideum.</title>
        <authorList>
            <person name="Eichinger L."/>
            <person name="Pachebat J.A."/>
            <person name="Gloeckner G."/>
            <person name="Rajandream M.A."/>
            <person name="Sucgang R."/>
            <person name="Berriman M."/>
            <person name="Song J."/>
            <person name="Olsen R."/>
            <person name="Szafranski K."/>
            <person name="Xu Q."/>
            <person name="Tunggal B."/>
            <person name="Kummerfeld S."/>
            <person name="Madera M."/>
            <person name="Konfortov B.A."/>
            <person name="Rivero F."/>
            <person name="Bankier A.T."/>
            <person name="Lehmann R."/>
            <person name="Hamlin N."/>
            <person name="Davies R."/>
            <person name="Gaudet P."/>
            <person name="Fey P."/>
            <person name="Pilcher K."/>
            <person name="Chen G."/>
            <person name="Saunders D."/>
            <person name="Sodergren E.J."/>
            <person name="Davis P."/>
            <person name="Kerhornou A."/>
            <person name="Nie X."/>
            <person name="Hall N."/>
            <person name="Anjard C."/>
            <person name="Hemphill L."/>
            <person name="Bason N."/>
            <person name="Farbrother P."/>
            <person name="Desany B."/>
            <person name="Just E."/>
            <person name="Morio T."/>
            <person name="Rost R."/>
            <person name="Churcher C.M."/>
            <person name="Cooper J."/>
            <person name="Haydock S."/>
            <person name="van Driessche N."/>
            <person name="Cronin A."/>
            <person name="Goodhead I."/>
            <person name="Muzny D.M."/>
            <person name="Mourier T."/>
            <person name="Pain A."/>
            <person name="Lu M."/>
            <person name="Harper D."/>
            <person name="Lindsay R."/>
            <person name="Hauser H."/>
            <person name="James K.D."/>
            <person name="Quiles M."/>
            <person name="Madan Babu M."/>
            <person name="Saito T."/>
            <person name="Buchrieser C."/>
            <person name="Wardroper A."/>
            <person name="Felder M."/>
            <person name="Thangavelu M."/>
            <person name="Johnson D."/>
            <person name="Knights A."/>
            <person name="Loulseged H."/>
            <person name="Mungall K.L."/>
            <person name="Oliver K."/>
            <person name="Price C."/>
            <person name="Quail M.A."/>
            <person name="Urushihara H."/>
            <person name="Hernandez J."/>
            <person name="Rabbinowitsch E."/>
            <person name="Steffen D."/>
            <person name="Sanders M."/>
            <person name="Ma J."/>
            <person name="Kohara Y."/>
            <person name="Sharp S."/>
            <person name="Simmonds M.N."/>
            <person name="Spiegler S."/>
            <person name="Tivey A."/>
            <person name="Sugano S."/>
            <person name="White B."/>
            <person name="Walker D."/>
            <person name="Woodward J.R."/>
            <person name="Winckler T."/>
            <person name="Tanaka Y."/>
            <person name="Shaulsky G."/>
            <person name="Schleicher M."/>
            <person name="Weinstock G.M."/>
            <person name="Rosenthal A."/>
            <person name="Cox E.C."/>
            <person name="Chisholm R.L."/>
            <person name="Gibbs R.A."/>
            <person name="Loomis W.F."/>
            <person name="Platzer M."/>
            <person name="Kay R.R."/>
            <person name="Williams J.G."/>
            <person name="Dear P.H."/>
            <person name="Noegel A.A."/>
            <person name="Barrell B.G."/>
            <person name="Kuspa A."/>
        </authorList>
    </citation>
    <scope>NUCLEOTIDE SEQUENCE [LARGE SCALE GENOMIC DNA]</scope>
    <source>
        <strain>AX4</strain>
    </source>
</reference>
<protein>
    <recommendedName>
        <fullName>Tubulin-specific chaperone A</fullName>
    </recommendedName>
    <alternativeName>
        <fullName>Tubulin-folding cofactor A</fullName>
        <shortName>CFA</shortName>
    </alternativeName>
</protein>
<feature type="chain" id="PRO_0000330741" description="Tubulin-specific chaperone A">
    <location>
        <begin position="1"/>
        <end position="113"/>
    </location>
</feature>
<dbReference type="EMBL" id="AAFI02000006">
    <property type="protein sequence ID" value="EAL71543.2"/>
    <property type="molecule type" value="Genomic_DNA"/>
</dbReference>
<dbReference type="RefSeq" id="XP_645497.2">
    <property type="nucleotide sequence ID" value="XM_640405.2"/>
</dbReference>
<dbReference type="SMR" id="Q75JC8"/>
<dbReference type="BioGRID" id="1243128">
    <property type="interactions" value="1"/>
</dbReference>
<dbReference type="FunCoup" id="Q75JC8">
    <property type="interactions" value="287"/>
</dbReference>
<dbReference type="STRING" id="44689.Q75JC8"/>
<dbReference type="PaxDb" id="44689-DDB0266633"/>
<dbReference type="EnsemblProtists" id="EAL71543">
    <property type="protein sequence ID" value="EAL71543"/>
    <property type="gene ID" value="DDB_G0271706"/>
</dbReference>
<dbReference type="GeneID" id="8618125"/>
<dbReference type="KEGG" id="ddi:DDB_G0271706"/>
<dbReference type="dictyBase" id="DDB_G0271706">
    <property type="gene designation" value="tbcA"/>
</dbReference>
<dbReference type="VEuPathDB" id="AmoebaDB:DDB_G0271706"/>
<dbReference type="eggNOG" id="ENOG502SCKC">
    <property type="taxonomic scope" value="Eukaryota"/>
</dbReference>
<dbReference type="HOGENOM" id="CLU_130569_1_1_1"/>
<dbReference type="InParanoid" id="Q75JC8"/>
<dbReference type="OMA" id="DDGSEIW"/>
<dbReference type="PhylomeDB" id="Q75JC8"/>
<dbReference type="PRO" id="PR:Q75JC8"/>
<dbReference type="Proteomes" id="UP000002195">
    <property type="component" value="Chromosome 2"/>
</dbReference>
<dbReference type="GO" id="GO:0005737">
    <property type="term" value="C:cytoplasm"/>
    <property type="evidence" value="ECO:0007669"/>
    <property type="project" value="UniProtKB-KW"/>
</dbReference>
<dbReference type="GO" id="GO:0005874">
    <property type="term" value="C:microtubule"/>
    <property type="evidence" value="ECO:0007669"/>
    <property type="project" value="UniProtKB-KW"/>
</dbReference>
<dbReference type="GO" id="GO:0015630">
    <property type="term" value="C:microtubule cytoskeleton"/>
    <property type="evidence" value="ECO:0000318"/>
    <property type="project" value="GO_Central"/>
</dbReference>
<dbReference type="GO" id="GO:0048487">
    <property type="term" value="F:beta-tubulin binding"/>
    <property type="evidence" value="ECO:0007669"/>
    <property type="project" value="InterPro"/>
</dbReference>
<dbReference type="GO" id="GO:0015631">
    <property type="term" value="F:tubulin binding"/>
    <property type="evidence" value="ECO:0000318"/>
    <property type="project" value="GO_Central"/>
</dbReference>
<dbReference type="GO" id="GO:0007023">
    <property type="term" value="P:post-chaperonin tubulin folding pathway"/>
    <property type="evidence" value="ECO:0007669"/>
    <property type="project" value="InterPro"/>
</dbReference>
<dbReference type="GO" id="GO:0006457">
    <property type="term" value="P:protein folding"/>
    <property type="evidence" value="ECO:0000318"/>
    <property type="project" value="GO_Central"/>
</dbReference>
<dbReference type="GO" id="GO:0007021">
    <property type="term" value="P:tubulin complex assembly"/>
    <property type="evidence" value="ECO:0000318"/>
    <property type="project" value="GO_Central"/>
</dbReference>
<dbReference type="FunFam" id="1.20.58.90:FF:000010">
    <property type="entry name" value="Tubulin-specific chaperone A"/>
    <property type="match status" value="1"/>
</dbReference>
<dbReference type="Gene3D" id="1.20.58.90">
    <property type="match status" value="1"/>
</dbReference>
<dbReference type="InterPro" id="IPR004226">
    <property type="entry name" value="TBCA"/>
</dbReference>
<dbReference type="InterPro" id="IPR036126">
    <property type="entry name" value="TBCA_sf"/>
</dbReference>
<dbReference type="PANTHER" id="PTHR21500">
    <property type="entry name" value="TUBULIN-SPECIFIC CHAPERONE A"/>
    <property type="match status" value="1"/>
</dbReference>
<dbReference type="PANTHER" id="PTHR21500:SF0">
    <property type="entry name" value="TUBULIN-SPECIFIC CHAPERONE A"/>
    <property type="match status" value="1"/>
</dbReference>
<dbReference type="Pfam" id="PF02970">
    <property type="entry name" value="TBCA"/>
    <property type="match status" value="1"/>
</dbReference>
<dbReference type="SUPFAM" id="SSF46988">
    <property type="entry name" value="Tubulin chaperone cofactor A"/>
    <property type="match status" value="1"/>
</dbReference>
<proteinExistence type="inferred from homology"/>
<accession>Q75JC8</accession>
<accession>Q55AM5</accession>
<evidence type="ECO:0000250" key="1"/>
<evidence type="ECO:0000305" key="2"/>
<keyword id="KW-0143">Chaperone</keyword>
<keyword id="KW-0963">Cytoplasm</keyword>
<keyword id="KW-0206">Cytoskeleton</keyword>
<keyword id="KW-0493">Microtubule</keyword>
<keyword id="KW-1185">Reference proteome</keyword>
<organism>
    <name type="scientific">Dictyostelium discoideum</name>
    <name type="common">Social amoeba</name>
    <dbReference type="NCBI Taxonomy" id="44689"/>
    <lineage>
        <taxon>Eukaryota</taxon>
        <taxon>Amoebozoa</taxon>
        <taxon>Evosea</taxon>
        <taxon>Eumycetozoa</taxon>
        <taxon>Dictyostelia</taxon>
        <taxon>Dictyosteliales</taxon>
        <taxon>Dictyosteliaceae</taxon>
        <taxon>Dictyostelium</taxon>
    </lineage>
</organism>